<feature type="chain" id="PRO_1000197459" description="Probable sugar efflux transporter">
    <location>
        <begin position="1"/>
        <end position="396"/>
    </location>
</feature>
<feature type="transmembrane region" description="Helical" evidence="1">
    <location>
        <begin position="15"/>
        <end position="35"/>
    </location>
</feature>
<feature type="transmembrane region" description="Helical" evidence="1">
    <location>
        <begin position="50"/>
        <end position="70"/>
    </location>
</feature>
<feature type="transmembrane region" description="Helical" evidence="1">
    <location>
        <begin position="81"/>
        <end position="101"/>
    </location>
</feature>
<feature type="transmembrane region" description="Helical" evidence="1">
    <location>
        <begin position="103"/>
        <end position="123"/>
    </location>
</feature>
<feature type="transmembrane region" description="Helical" evidence="1">
    <location>
        <begin position="136"/>
        <end position="156"/>
    </location>
</feature>
<feature type="transmembrane region" description="Helical" evidence="1">
    <location>
        <begin position="169"/>
        <end position="189"/>
    </location>
</feature>
<feature type="transmembrane region" description="Helical" evidence="1">
    <location>
        <begin position="209"/>
        <end position="229"/>
    </location>
</feature>
<feature type="transmembrane region" description="Helical" evidence="1">
    <location>
        <begin position="246"/>
        <end position="266"/>
    </location>
</feature>
<feature type="transmembrane region" description="Helical" evidence="1">
    <location>
        <begin position="275"/>
        <end position="295"/>
    </location>
</feature>
<feature type="transmembrane region" description="Helical" evidence="1">
    <location>
        <begin position="301"/>
        <end position="321"/>
    </location>
</feature>
<feature type="transmembrane region" description="Helical" evidence="1">
    <location>
        <begin position="333"/>
        <end position="353"/>
    </location>
</feature>
<feature type="transmembrane region" description="Helical" evidence="1">
    <location>
        <begin position="364"/>
        <end position="384"/>
    </location>
</feature>
<evidence type="ECO:0000255" key="1">
    <source>
        <dbReference type="HAMAP-Rule" id="MF_00517"/>
    </source>
</evidence>
<name>SOTB_SALPC</name>
<protein>
    <recommendedName>
        <fullName evidence="1">Probable sugar efflux transporter</fullName>
    </recommendedName>
</protein>
<comment type="function">
    <text evidence="1">Involved in the efflux of sugars. The physiological role may be the reduction of the intracellular concentration of toxic sugars or sugar metabolites.</text>
</comment>
<comment type="subcellular location">
    <subcellularLocation>
        <location evidence="1">Cell inner membrane</location>
        <topology evidence="1">Multi-pass membrane protein</topology>
    </subcellularLocation>
</comment>
<comment type="similarity">
    <text evidence="1">Belongs to the major facilitator superfamily. SotB (TC 2.A.1.2) family.</text>
</comment>
<dbReference type="EMBL" id="CP000857">
    <property type="protein sequence ID" value="ACN46329.1"/>
    <property type="molecule type" value="Genomic_DNA"/>
</dbReference>
<dbReference type="RefSeq" id="WP_000154619.1">
    <property type="nucleotide sequence ID" value="NC_012125.1"/>
</dbReference>
<dbReference type="SMR" id="C0Q4U6"/>
<dbReference type="KEGG" id="sei:SPC_2206"/>
<dbReference type="HOGENOM" id="CLU_001265_61_2_6"/>
<dbReference type="Proteomes" id="UP000001599">
    <property type="component" value="Chromosome"/>
</dbReference>
<dbReference type="GO" id="GO:0005886">
    <property type="term" value="C:plasma membrane"/>
    <property type="evidence" value="ECO:0007669"/>
    <property type="project" value="UniProtKB-SubCell"/>
</dbReference>
<dbReference type="GO" id="GO:0015144">
    <property type="term" value="F:carbohydrate transmembrane transporter activity"/>
    <property type="evidence" value="ECO:0007669"/>
    <property type="project" value="UniProtKB-UniRule"/>
</dbReference>
<dbReference type="CDD" id="cd17324">
    <property type="entry name" value="MFS_NepI_like"/>
    <property type="match status" value="1"/>
</dbReference>
<dbReference type="Gene3D" id="1.20.1250.20">
    <property type="entry name" value="MFS general substrate transporter like domains"/>
    <property type="match status" value="1"/>
</dbReference>
<dbReference type="HAMAP" id="MF_00517">
    <property type="entry name" value="MFS_SotB"/>
    <property type="match status" value="1"/>
</dbReference>
<dbReference type="InterPro" id="IPR011701">
    <property type="entry name" value="MFS"/>
</dbReference>
<dbReference type="InterPro" id="IPR020846">
    <property type="entry name" value="MFS_dom"/>
</dbReference>
<dbReference type="InterPro" id="IPR050189">
    <property type="entry name" value="MFS_Efflux_Transporters"/>
</dbReference>
<dbReference type="InterPro" id="IPR036259">
    <property type="entry name" value="MFS_trans_sf"/>
</dbReference>
<dbReference type="InterPro" id="IPR023495">
    <property type="entry name" value="Sugar_effux_transptr_put"/>
</dbReference>
<dbReference type="NCBIfam" id="NF002921">
    <property type="entry name" value="PRK03545.1"/>
    <property type="match status" value="1"/>
</dbReference>
<dbReference type="PANTHER" id="PTHR43124">
    <property type="entry name" value="PURINE EFFLUX PUMP PBUE"/>
    <property type="match status" value="1"/>
</dbReference>
<dbReference type="PANTHER" id="PTHR43124:SF4">
    <property type="entry name" value="SUGAR EFFLUX TRANSPORTER"/>
    <property type="match status" value="1"/>
</dbReference>
<dbReference type="Pfam" id="PF07690">
    <property type="entry name" value="MFS_1"/>
    <property type="match status" value="1"/>
</dbReference>
<dbReference type="SUPFAM" id="SSF103473">
    <property type="entry name" value="MFS general substrate transporter"/>
    <property type="match status" value="1"/>
</dbReference>
<dbReference type="PROSITE" id="PS50850">
    <property type="entry name" value="MFS"/>
    <property type="match status" value="1"/>
</dbReference>
<reference key="1">
    <citation type="journal article" date="2009" name="PLoS ONE">
        <title>Salmonella paratyphi C: genetic divergence from Salmonella choleraesuis and pathogenic convergence with Salmonella typhi.</title>
        <authorList>
            <person name="Liu W.-Q."/>
            <person name="Feng Y."/>
            <person name="Wang Y."/>
            <person name="Zou Q.-H."/>
            <person name="Chen F."/>
            <person name="Guo J.-T."/>
            <person name="Peng Y.-H."/>
            <person name="Jin Y."/>
            <person name="Li Y.-G."/>
            <person name="Hu S.-N."/>
            <person name="Johnston R.N."/>
            <person name="Liu G.-R."/>
            <person name="Liu S.-L."/>
        </authorList>
    </citation>
    <scope>NUCLEOTIDE SEQUENCE [LARGE SCALE GENOMIC DNA]</scope>
    <source>
        <strain>RKS4594</strain>
    </source>
</reference>
<sequence>MTINPVSRKVAWLRVVTLAIAAFIFNTTEFVPVGLLSDIAESFHMQTAQVGIMLTIYAWVVAVMSLPFMLLTSQMERRKLLICLFVLFIASHVLSFLAWNFTVLVISRIGIAFAHAIFWSITASLAIRLAPAGKRAQALSLIATGTALAMVLGLPIGRVVGQYFGWRTTFFAIGMGALITLLCLIKLLPKLPSEHSGSLKSLPLLFRRPALMSLYVLTVVVVTAHYTAYSYIEPFVQNVAGLSANFATVLLLILGGAGIIGSLVFGKLGNRHASSLVSIAIALLVVCLLLLLPAADSEAHLAILSIFWGIAIMVIGLGMQVKVLALAPDATDVAMALFSGIFNIGIGAGALVGNQVSLHWSMSAIGYIGDIPACAALVWAVLIFRKWPVTLEEQPH</sequence>
<proteinExistence type="inferred from homology"/>
<gene>
    <name evidence="1" type="primary">sotB</name>
    <name type="ordered locus">SPC_2206</name>
</gene>
<accession>C0Q4U6</accession>
<organism>
    <name type="scientific">Salmonella paratyphi C (strain RKS4594)</name>
    <dbReference type="NCBI Taxonomy" id="476213"/>
    <lineage>
        <taxon>Bacteria</taxon>
        <taxon>Pseudomonadati</taxon>
        <taxon>Pseudomonadota</taxon>
        <taxon>Gammaproteobacteria</taxon>
        <taxon>Enterobacterales</taxon>
        <taxon>Enterobacteriaceae</taxon>
        <taxon>Salmonella</taxon>
    </lineage>
</organism>
<keyword id="KW-0997">Cell inner membrane</keyword>
<keyword id="KW-1003">Cell membrane</keyword>
<keyword id="KW-0472">Membrane</keyword>
<keyword id="KW-0762">Sugar transport</keyword>
<keyword id="KW-0812">Transmembrane</keyword>
<keyword id="KW-1133">Transmembrane helix</keyword>
<keyword id="KW-0813">Transport</keyword>